<protein>
    <recommendedName>
        <fullName evidence="1">S-adenosylmethionine synthase</fullName>
        <shortName evidence="1">AdoMet synthase</shortName>
        <ecNumber evidence="1">2.5.1.6</ecNumber>
    </recommendedName>
    <alternativeName>
        <fullName evidence="1">MAT</fullName>
    </alternativeName>
    <alternativeName>
        <fullName evidence="1">Methionine adenosyltransferase</fullName>
    </alternativeName>
</protein>
<name>METK_SYNJB</name>
<evidence type="ECO:0000255" key="1">
    <source>
        <dbReference type="HAMAP-Rule" id="MF_00086"/>
    </source>
</evidence>
<reference key="1">
    <citation type="journal article" date="2007" name="ISME J.">
        <title>Population level functional diversity in a microbial community revealed by comparative genomic and metagenomic analyses.</title>
        <authorList>
            <person name="Bhaya D."/>
            <person name="Grossman A.R."/>
            <person name="Steunou A.-S."/>
            <person name="Khuri N."/>
            <person name="Cohan F.M."/>
            <person name="Hamamura N."/>
            <person name="Melendrez M.C."/>
            <person name="Bateson M.M."/>
            <person name="Ward D.M."/>
            <person name="Heidelberg J.F."/>
        </authorList>
    </citation>
    <scope>NUCLEOTIDE SEQUENCE [LARGE SCALE GENOMIC DNA]</scope>
    <source>
        <strain>JA-2-3B'a(2-13)</strain>
    </source>
</reference>
<proteinExistence type="inferred from homology"/>
<gene>
    <name evidence="1" type="primary">metK</name>
    <name type="ordered locus">CYB_2590</name>
</gene>
<sequence length="414" mass="44820">MFSSESVTEGHPDKICDQISDAIVDALLTADPLSRVAAEVVVNTGLVLLTGEITSQAQVNFTRLVRDKVAEIGYTDAKNGFCAESCAVLVAFDEQSPDIAQGVNMALESRGSQEDQFDLVGAGDQGLMFGFACDETPELMPLPISLAHRLSRQLATVRKNGTLPYLRPDGKTQVTVAYEEGRPVGIHTLLISTQHTPTIGAITEEAAVQERIRADLWEAVVTPVFAELPIKPDSHTRFLTNPTGKFVIGGPQGDAGLTGRKIIVDTYGGYSRHGGGAFSGKDPTKVDRSAAYAARYVAKNIVAAGLAQKCEVQVSYAIGVARPINILVETFGTGRIPDEELLRLVQRHFDLRPAAILAQFQLRELPRQRGGRFYQNVAVYGHFGQTHLDLPWERTDKAALLREEALAKATALLA</sequence>
<comment type="function">
    <text evidence="1">Catalyzes the formation of S-adenosylmethionine (AdoMet) from methionine and ATP. The overall synthetic reaction is composed of two sequential steps, AdoMet formation and the subsequent tripolyphosphate hydrolysis which occurs prior to release of AdoMet from the enzyme.</text>
</comment>
<comment type="catalytic activity">
    <reaction evidence="1">
        <text>L-methionine + ATP + H2O = S-adenosyl-L-methionine + phosphate + diphosphate</text>
        <dbReference type="Rhea" id="RHEA:21080"/>
        <dbReference type="ChEBI" id="CHEBI:15377"/>
        <dbReference type="ChEBI" id="CHEBI:30616"/>
        <dbReference type="ChEBI" id="CHEBI:33019"/>
        <dbReference type="ChEBI" id="CHEBI:43474"/>
        <dbReference type="ChEBI" id="CHEBI:57844"/>
        <dbReference type="ChEBI" id="CHEBI:59789"/>
        <dbReference type="EC" id="2.5.1.6"/>
    </reaction>
</comment>
<comment type="cofactor">
    <cofactor evidence="1">
        <name>Mg(2+)</name>
        <dbReference type="ChEBI" id="CHEBI:18420"/>
    </cofactor>
    <text evidence="1">Binds 2 divalent ions per subunit.</text>
</comment>
<comment type="cofactor">
    <cofactor evidence="1">
        <name>K(+)</name>
        <dbReference type="ChEBI" id="CHEBI:29103"/>
    </cofactor>
    <text evidence="1">Binds 1 potassium ion per subunit.</text>
</comment>
<comment type="pathway">
    <text evidence="1">Amino-acid biosynthesis; S-adenosyl-L-methionine biosynthesis; S-adenosyl-L-methionine from L-methionine: step 1/1.</text>
</comment>
<comment type="subunit">
    <text evidence="1">Homotetramer; dimer of dimers.</text>
</comment>
<comment type="subcellular location">
    <subcellularLocation>
        <location evidence="1">Cytoplasm</location>
    </subcellularLocation>
</comment>
<comment type="similarity">
    <text evidence="1">Belongs to the AdoMet synthase family.</text>
</comment>
<accession>Q2JIN3</accession>
<organism>
    <name type="scientific">Synechococcus sp. (strain JA-2-3B'a(2-13))</name>
    <name type="common">Cyanobacteria bacterium Yellowstone B-Prime</name>
    <dbReference type="NCBI Taxonomy" id="321332"/>
    <lineage>
        <taxon>Bacteria</taxon>
        <taxon>Bacillati</taxon>
        <taxon>Cyanobacteriota</taxon>
        <taxon>Cyanophyceae</taxon>
        <taxon>Synechococcales</taxon>
        <taxon>Synechococcaceae</taxon>
        <taxon>Synechococcus</taxon>
    </lineage>
</organism>
<dbReference type="EC" id="2.5.1.6" evidence="1"/>
<dbReference type="EMBL" id="CP000240">
    <property type="protein sequence ID" value="ABD03521.1"/>
    <property type="molecule type" value="Genomic_DNA"/>
</dbReference>
<dbReference type="SMR" id="Q2JIN3"/>
<dbReference type="STRING" id="321332.CYB_2590"/>
<dbReference type="KEGG" id="cyb:CYB_2590"/>
<dbReference type="eggNOG" id="COG0192">
    <property type="taxonomic scope" value="Bacteria"/>
</dbReference>
<dbReference type="HOGENOM" id="CLU_041802_1_1_3"/>
<dbReference type="UniPathway" id="UPA00315">
    <property type="reaction ID" value="UER00080"/>
</dbReference>
<dbReference type="Proteomes" id="UP000001938">
    <property type="component" value="Chromosome"/>
</dbReference>
<dbReference type="GO" id="GO:0005737">
    <property type="term" value="C:cytoplasm"/>
    <property type="evidence" value="ECO:0007669"/>
    <property type="project" value="UniProtKB-SubCell"/>
</dbReference>
<dbReference type="GO" id="GO:0005524">
    <property type="term" value="F:ATP binding"/>
    <property type="evidence" value="ECO:0007669"/>
    <property type="project" value="UniProtKB-UniRule"/>
</dbReference>
<dbReference type="GO" id="GO:0000287">
    <property type="term" value="F:magnesium ion binding"/>
    <property type="evidence" value="ECO:0007669"/>
    <property type="project" value="UniProtKB-UniRule"/>
</dbReference>
<dbReference type="GO" id="GO:0004478">
    <property type="term" value="F:methionine adenosyltransferase activity"/>
    <property type="evidence" value="ECO:0007669"/>
    <property type="project" value="UniProtKB-UniRule"/>
</dbReference>
<dbReference type="GO" id="GO:0006730">
    <property type="term" value="P:one-carbon metabolic process"/>
    <property type="evidence" value="ECO:0007669"/>
    <property type="project" value="UniProtKB-KW"/>
</dbReference>
<dbReference type="GO" id="GO:0006556">
    <property type="term" value="P:S-adenosylmethionine biosynthetic process"/>
    <property type="evidence" value="ECO:0007669"/>
    <property type="project" value="UniProtKB-UniRule"/>
</dbReference>
<dbReference type="CDD" id="cd18079">
    <property type="entry name" value="S-AdoMet_synt"/>
    <property type="match status" value="1"/>
</dbReference>
<dbReference type="FunFam" id="3.30.300.10:FF:000003">
    <property type="entry name" value="S-adenosylmethionine synthase"/>
    <property type="match status" value="1"/>
</dbReference>
<dbReference type="Gene3D" id="3.30.300.10">
    <property type="match status" value="3"/>
</dbReference>
<dbReference type="HAMAP" id="MF_00086">
    <property type="entry name" value="S_AdoMet_synth1"/>
    <property type="match status" value="1"/>
</dbReference>
<dbReference type="InterPro" id="IPR022631">
    <property type="entry name" value="ADOMET_SYNTHASE_CS"/>
</dbReference>
<dbReference type="InterPro" id="IPR022630">
    <property type="entry name" value="S-AdoMet_synt_C"/>
</dbReference>
<dbReference type="InterPro" id="IPR022629">
    <property type="entry name" value="S-AdoMet_synt_central"/>
</dbReference>
<dbReference type="InterPro" id="IPR022628">
    <property type="entry name" value="S-AdoMet_synt_N"/>
</dbReference>
<dbReference type="InterPro" id="IPR002133">
    <property type="entry name" value="S-AdoMet_synthetase"/>
</dbReference>
<dbReference type="InterPro" id="IPR022636">
    <property type="entry name" value="S-AdoMet_synthetase_sfam"/>
</dbReference>
<dbReference type="NCBIfam" id="TIGR01034">
    <property type="entry name" value="metK"/>
    <property type="match status" value="1"/>
</dbReference>
<dbReference type="PANTHER" id="PTHR11964">
    <property type="entry name" value="S-ADENOSYLMETHIONINE SYNTHETASE"/>
    <property type="match status" value="1"/>
</dbReference>
<dbReference type="Pfam" id="PF02773">
    <property type="entry name" value="S-AdoMet_synt_C"/>
    <property type="match status" value="1"/>
</dbReference>
<dbReference type="Pfam" id="PF02772">
    <property type="entry name" value="S-AdoMet_synt_M"/>
    <property type="match status" value="1"/>
</dbReference>
<dbReference type="Pfam" id="PF00438">
    <property type="entry name" value="S-AdoMet_synt_N"/>
    <property type="match status" value="1"/>
</dbReference>
<dbReference type="PIRSF" id="PIRSF000497">
    <property type="entry name" value="MAT"/>
    <property type="match status" value="1"/>
</dbReference>
<dbReference type="SUPFAM" id="SSF55973">
    <property type="entry name" value="S-adenosylmethionine synthetase"/>
    <property type="match status" value="3"/>
</dbReference>
<dbReference type="PROSITE" id="PS00376">
    <property type="entry name" value="ADOMET_SYNTHASE_1"/>
    <property type="match status" value="1"/>
</dbReference>
<dbReference type="PROSITE" id="PS00377">
    <property type="entry name" value="ADOMET_SYNTHASE_2"/>
    <property type="match status" value="1"/>
</dbReference>
<keyword id="KW-0067">ATP-binding</keyword>
<keyword id="KW-0963">Cytoplasm</keyword>
<keyword id="KW-0460">Magnesium</keyword>
<keyword id="KW-0479">Metal-binding</keyword>
<keyword id="KW-0547">Nucleotide-binding</keyword>
<keyword id="KW-0554">One-carbon metabolism</keyword>
<keyword id="KW-0630">Potassium</keyword>
<keyword id="KW-1185">Reference proteome</keyword>
<keyword id="KW-0808">Transferase</keyword>
<feature type="chain" id="PRO_0000241049" description="S-adenosylmethionine synthase">
    <location>
        <begin position="1"/>
        <end position="414"/>
    </location>
</feature>
<feature type="region of interest" description="Flexible loop" evidence="1">
    <location>
        <begin position="95"/>
        <end position="105"/>
    </location>
</feature>
<feature type="binding site" description="in other chain" evidence="1">
    <location>
        <position position="11"/>
    </location>
    <ligand>
        <name>ATP</name>
        <dbReference type="ChEBI" id="CHEBI:30616"/>
        <note>ligand shared between two neighboring subunits</note>
    </ligand>
</feature>
<feature type="binding site" evidence="1">
    <location>
        <position position="13"/>
    </location>
    <ligand>
        <name>Mg(2+)</name>
        <dbReference type="ChEBI" id="CHEBI:18420"/>
    </ligand>
</feature>
<feature type="binding site" evidence="1">
    <location>
        <position position="39"/>
    </location>
    <ligand>
        <name>K(+)</name>
        <dbReference type="ChEBI" id="CHEBI:29103"/>
    </ligand>
</feature>
<feature type="binding site" description="in other chain" evidence="1">
    <location>
        <position position="52"/>
    </location>
    <ligand>
        <name>L-methionine</name>
        <dbReference type="ChEBI" id="CHEBI:57844"/>
        <note>ligand shared between two neighboring subunits</note>
    </ligand>
</feature>
<feature type="binding site" description="in other chain" evidence="1">
    <location>
        <position position="95"/>
    </location>
    <ligand>
        <name>L-methionine</name>
        <dbReference type="ChEBI" id="CHEBI:57844"/>
        <note>ligand shared between two neighboring subunits</note>
    </ligand>
</feature>
<feature type="binding site" description="in other chain" evidence="1">
    <location>
        <begin position="169"/>
        <end position="171"/>
    </location>
    <ligand>
        <name>ATP</name>
        <dbReference type="ChEBI" id="CHEBI:30616"/>
        <note>ligand shared between two neighboring subunits</note>
    </ligand>
</feature>
<feature type="binding site" description="in other chain" evidence="1">
    <location>
        <begin position="245"/>
        <end position="246"/>
    </location>
    <ligand>
        <name>ATP</name>
        <dbReference type="ChEBI" id="CHEBI:30616"/>
        <note>ligand shared between two neighboring subunits</note>
    </ligand>
</feature>
<feature type="binding site" evidence="1">
    <location>
        <position position="254"/>
    </location>
    <ligand>
        <name>ATP</name>
        <dbReference type="ChEBI" id="CHEBI:30616"/>
        <note>ligand shared between two neighboring subunits</note>
    </ligand>
</feature>
<feature type="binding site" evidence="1">
    <location>
        <position position="254"/>
    </location>
    <ligand>
        <name>L-methionine</name>
        <dbReference type="ChEBI" id="CHEBI:57844"/>
        <note>ligand shared between two neighboring subunits</note>
    </ligand>
</feature>
<feature type="binding site" description="in other chain" evidence="1">
    <location>
        <begin position="260"/>
        <end position="261"/>
    </location>
    <ligand>
        <name>ATP</name>
        <dbReference type="ChEBI" id="CHEBI:30616"/>
        <note>ligand shared between two neighboring subunits</note>
    </ligand>
</feature>
<feature type="binding site" evidence="1">
    <location>
        <position position="277"/>
    </location>
    <ligand>
        <name>ATP</name>
        <dbReference type="ChEBI" id="CHEBI:30616"/>
        <note>ligand shared between two neighboring subunits</note>
    </ligand>
</feature>
<feature type="binding site" evidence="1">
    <location>
        <position position="281"/>
    </location>
    <ligand>
        <name>ATP</name>
        <dbReference type="ChEBI" id="CHEBI:30616"/>
        <note>ligand shared between two neighboring subunits</note>
    </ligand>
</feature>
<feature type="binding site" description="in other chain" evidence="1">
    <location>
        <position position="285"/>
    </location>
    <ligand>
        <name>L-methionine</name>
        <dbReference type="ChEBI" id="CHEBI:57844"/>
        <note>ligand shared between two neighboring subunits</note>
    </ligand>
</feature>